<evidence type="ECO:0000255" key="1"/>
<evidence type="ECO:0000255" key="2">
    <source>
        <dbReference type="HAMAP-Rule" id="MF_00913"/>
    </source>
</evidence>
<accession>B1XT08</accession>
<sequence>MNLKEKLFPENRLGLNRFWNFSRGGIDNFRTGLRDAVSGVEQTRSRMMEYDQLLVWAILSLMLIGLVMVYSASITLADGPKYANYSSNFFLIRHMISLAIAIGVGIWAFKIPTKVWDRYSPVIFGITVLLLIAVLIPGVGRGVNGAKRWIPLGLMNFQSSELMKFAAVIFAASYTVQRQEYLHSFVKGMLPMGIAVALVGGLLMAEPDMGAFVVVALIAFGILFLGGINAKLFGGLIAVGLMSGATMIAFSPLRRGRMLAFMDPWQVDNAANKGYQLTHSLMAFGRGEWFGTGLGGSVEKLHYLPEAHTDFIMAVIGEELGFVGVVVMIFLFYWIVRRAFLIGRTALQLDRSFAGLAAKGVAIWIGWQAFINMGVNLGLLPTKGLTLPLVSYGGSGILMNAVAMAMLLRIDFENRILMRGGKL</sequence>
<keyword id="KW-0131">Cell cycle</keyword>
<keyword id="KW-0132">Cell division</keyword>
<keyword id="KW-0997">Cell inner membrane</keyword>
<keyword id="KW-1003">Cell membrane</keyword>
<keyword id="KW-0133">Cell shape</keyword>
<keyword id="KW-0961">Cell wall biogenesis/degradation</keyword>
<keyword id="KW-0328">Glycosyltransferase</keyword>
<keyword id="KW-0472">Membrane</keyword>
<keyword id="KW-0573">Peptidoglycan synthesis</keyword>
<keyword id="KW-0808">Transferase</keyword>
<keyword id="KW-0812">Transmembrane</keyword>
<keyword id="KW-1133">Transmembrane helix</keyword>
<gene>
    <name evidence="2" type="primary">ftsW</name>
    <name type="ordered locus">Pnec_0180</name>
</gene>
<reference key="1">
    <citation type="journal article" date="2013" name="Proc. Natl. Acad. Sci. U.S.A.">
        <title>Polynucleobacter necessarius, a model for genome reduction in both free-living and symbiotic bacteria.</title>
        <authorList>
            <person name="Boscaro V."/>
            <person name="Felletti M."/>
            <person name="Vannini C."/>
            <person name="Ackerman M.S."/>
            <person name="Chain P.S."/>
            <person name="Malfatti S."/>
            <person name="Vergez L.M."/>
            <person name="Shin M."/>
            <person name="Doak T.G."/>
            <person name="Lynch M."/>
            <person name="Petroni G."/>
        </authorList>
    </citation>
    <scope>NUCLEOTIDE SEQUENCE [LARGE SCALE GENOMIC DNA]</scope>
    <source>
        <strain>STIR1</strain>
    </source>
</reference>
<name>FTSW_POLNS</name>
<comment type="function">
    <text evidence="2">Peptidoglycan polymerase that is essential for cell division.</text>
</comment>
<comment type="catalytic activity">
    <reaction evidence="2">
        <text>[GlcNAc-(1-&gt;4)-Mur2Ac(oyl-L-Ala-gamma-D-Glu-L-Lys-D-Ala-D-Ala)](n)-di-trans,octa-cis-undecaprenyl diphosphate + beta-D-GlcNAc-(1-&gt;4)-Mur2Ac(oyl-L-Ala-gamma-D-Glu-L-Lys-D-Ala-D-Ala)-di-trans,octa-cis-undecaprenyl diphosphate = [GlcNAc-(1-&gt;4)-Mur2Ac(oyl-L-Ala-gamma-D-Glu-L-Lys-D-Ala-D-Ala)](n+1)-di-trans,octa-cis-undecaprenyl diphosphate + di-trans,octa-cis-undecaprenyl diphosphate + H(+)</text>
        <dbReference type="Rhea" id="RHEA:23708"/>
        <dbReference type="Rhea" id="RHEA-COMP:9602"/>
        <dbReference type="Rhea" id="RHEA-COMP:9603"/>
        <dbReference type="ChEBI" id="CHEBI:15378"/>
        <dbReference type="ChEBI" id="CHEBI:58405"/>
        <dbReference type="ChEBI" id="CHEBI:60033"/>
        <dbReference type="ChEBI" id="CHEBI:78435"/>
        <dbReference type="EC" id="2.4.99.28"/>
    </reaction>
</comment>
<comment type="pathway">
    <text evidence="2">Cell wall biogenesis; peptidoglycan biosynthesis.</text>
</comment>
<comment type="subcellular location">
    <subcellularLocation>
        <location evidence="2">Cell inner membrane</location>
        <topology evidence="2">Multi-pass membrane protein</topology>
    </subcellularLocation>
    <text evidence="2">Localizes to the division septum.</text>
</comment>
<comment type="similarity">
    <text evidence="2">Belongs to the SEDS family. FtsW subfamily.</text>
</comment>
<feature type="chain" id="PRO_0000415206" description="Probable peptidoglycan glycosyltransferase FtsW">
    <location>
        <begin position="1"/>
        <end position="423"/>
    </location>
</feature>
<feature type="topological domain" description="Cytoplasmic" evidence="1">
    <location>
        <begin position="1"/>
        <end position="53"/>
    </location>
</feature>
<feature type="transmembrane region" description="Helical" evidence="2">
    <location>
        <begin position="54"/>
        <end position="74"/>
    </location>
</feature>
<feature type="topological domain" description="Periplasmic" evidence="1">
    <location>
        <begin position="75"/>
        <end position="88"/>
    </location>
</feature>
<feature type="transmembrane region" description="Helical" evidence="2">
    <location>
        <begin position="89"/>
        <end position="109"/>
    </location>
</feature>
<feature type="topological domain" description="Cytoplasmic" evidence="1">
    <location>
        <begin position="110"/>
        <end position="119"/>
    </location>
</feature>
<feature type="transmembrane region" description="Helical" evidence="2">
    <location>
        <begin position="120"/>
        <end position="140"/>
    </location>
</feature>
<feature type="topological domain" description="Periplasmic" evidence="1">
    <location>
        <begin position="141"/>
        <end position="149"/>
    </location>
</feature>
<feature type="transmembrane region" description="Helical" evidence="2">
    <location>
        <begin position="150"/>
        <end position="170"/>
    </location>
</feature>
<feature type="topological domain" description="Cytoplasmic" evidence="1">
    <location>
        <begin position="171"/>
        <end position="184"/>
    </location>
</feature>
<feature type="transmembrane region" description="Helical" evidence="2">
    <location>
        <begin position="185"/>
        <end position="205"/>
    </location>
</feature>
<feature type="topological domain" description="Periplasmic" evidence="1">
    <location>
        <begin position="206"/>
        <end position="208"/>
    </location>
</feature>
<feature type="transmembrane region" description="Helical" evidence="2">
    <location>
        <begin position="209"/>
        <end position="229"/>
    </location>
</feature>
<feature type="topological domain" description="Cytoplasmic" evidence="1">
    <location>
        <begin position="230"/>
        <end position="231"/>
    </location>
</feature>
<feature type="transmembrane region" description="Helical" evidence="2">
    <location>
        <begin position="232"/>
        <end position="252"/>
    </location>
</feature>
<feature type="topological domain" description="Periplasmic" evidence="1">
    <location>
        <begin position="253"/>
        <end position="310"/>
    </location>
</feature>
<feature type="transmembrane region" description="Helical" evidence="2">
    <location>
        <begin position="311"/>
        <end position="331"/>
    </location>
</feature>
<feature type="topological domain" description="Cytoplasmic" evidence="1">
    <location>
        <begin position="332"/>
        <end position="359"/>
    </location>
</feature>
<feature type="transmembrane region" description="Helical" evidence="2">
    <location>
        <begin position="360"/>
        <end position="380"/>
    </location>
</feature>
<feature type="topological domain" description="Periplasmic" evidence="1">
    <location>
        <begin position="381"/>
        <end position="386"/>
    </location>
</feature>
<feature type="transmembrane region" description="Helical" evidence="2">
    <location>
        <begin position="387"/>
        <end position="407"/>
    </location>
</feature>
<feature type="topological domain" description="Cytoplasmic" evidence="1">
    <location>
        <begin position="408"/>
        <end position="423"/>
    </location>
</feature>
<proteinExistence type="inferred from homology"/>
<dbReference type="EC" id="2.4.99.28" evidence="2"/>
<dbReference type="EMBL" id="CP001010">
    <property type="protein sequence ID" value="ACB43485.1"/>
    <property type="molecule type" value="Genomic_DNA"/>
</dbReference>
<dbReference type="SMR" id="B1XT08"/>
<dbReference type="STRING" id="452638.Pnec_0180"/>
<dbReference type="KEGG" id="pne:Pnec_0180"/>
<dbReference type="eggNOG" id="COG0772">
    <property type="taxonomic scope" value="Bacteria"/>
</dbReference>
<dbReference type="HOGENOM" id="CLU_029243_1_1_4"/>
<dbReference type="OrthoDB" id="9768187at2"/>
<dbReference type="UniPathway" id="UPA00219"/>
<dbReference type="GO" id="GO:0032153">
    <property type="term" value="C:cell division site"/>
    <property type="evidence" value="ECO:0007669"/>
    <property type="project" value="UniProtKB-UniRule"/>
</dbReference>
<dbReference type="GO" id="GO:0005886">
    <property type="term" value="C:plasma membrane"/>
    <property type="evidence" value="ECO:0007669"/>
    <property type="project" value="UniProtKB-SubCell"/>
</dbReference>
<dbReference type="GO" id="GO:0015648">
    <property type="term" value="F:lipid-linked peptidoglycan transporter activity"/>
    <property type="evidence" value="ECO:0007669"/>
    <property type="project" value="TreeGrafter"/>
</dbReference>
<dbReference type="GO" id="GO:0008955">
    <property type="term" value="F:peptidoglycan glycosyltransferase activity"/>
    <property type="evidence" value="ECO:0007669"/>
    <property type="project" value="UniProtKB-UniRule"/>
</dbReference>
<dbReference type="GO" id="GO:0071555">
    <property type="term" value="P:cell wall organization"/>
    <property type="evidence" value="ECO:0007669"/>
    <property type="project" value="UniProtKB-KW"/>
</dbReference>
<dbReference type="GO" id="GO:0043093">
    <property type="term" value="P:FtsZ-dependent cytokinesis"/>
    <property type="evidence" value="ECO:0007669"/>
    <property type="project" value="UniProtKB-UniRule"/>
</dbReference>
<dbReference type="GO" id="GO:0009252">
    <property type="term" value="P:peptidoglycan biosynthetic process"/>
    <property type="evidence" value="ECO:0007669"/>
    <property type="project" value="UniProtKB-UniRule"/>
</dbReference>
<dbReference type="GO" id="GO:0008360">
    <property type="term" value="P:regulation of cell shape"/>
    <property type="evidence" value="ECO:0007669"/>
    <property type="project" value="UniProtKB-KW"/>
</dbReference>
<dbReference type="HAMAP" id="MF_00913">
    <property type="entry name" value="PGT_FtsW_proteobact"/>
    <property type="match status" value="1"/>
</dbReference>
<dbReference type="InterPro" id="IPR013437">
    <property type="entry name" value="FtsW"/>
</dbReference>
<dbReference type="InterPro" id="IPR001182">
    <property type="entry name" value="FtsW/RodA"/>
</dbReference>
<dbReference type="NCBIfam" id="TIGR02614">
    <property type="entry name" value="ftsW"/>
    <property type="match status" value="1"/>
</dbReference>
<dbReference type="PANTHER" id="PTHR30474">
    <property type="entry name" value="CELL CYCLE PROTEIN"/>
    <property type="match status" value="1"/>
</dbReference>
<dbReference type="PANTHER" id="PTHR30474:SF2">
    <property type="entry name" value="PEPTIDOGLYCAN GLYCOSYLTRANSFERASE FTSW-RELATED"/>
    <property type="match status" value="1"/>
</dbReference>
<dbReference type="Pfam" id="PF01098">
    <property type="entry name" value="FTSW_RODA_SPOVE"/>
    <property type="match status" value="1"/>
</dbReference>
<protein>
    <recommendedName>
        <fullName evidence="2">Probable peptidoglycan glycosyltransferase FtsW</fullName>
        <shortName evidence="2">PGT</shortName>
        <ecNumber evidence="2">2.4.99.28</ecNumber>
    </recommendedName>
    <alternativeName>
        <fullName evidence="2">Cell division protein FtsW</fullName>
    </alternativeName>
    <alternativeName>
        <fullName evidence="2">Cell wall polymerase</fullName>
    </alternativeName>
    <alternativeName>
        <fullName evidence="2">Peptidoglycan polymerase</fullName>
        <shortName evidence="2">PG polymerase</shortName>
    </alternativeName>
</protein>
<organism>
    <name type="scientific">Polynucleobacter necessarius subsp. necessarius (strain STIR1)</name>
    <dbReference type="NCBI Taxonomy" id="452638"/>
    <lineage>
        <taxon>Bacteria</taxon>
        <taxon>Pseudomonadati</taxon>
        <taxon>Pseudomonadota</taxon>
        <taxon>Betaproteobacteria</taxon>
        <taxon>Burkholderiales</taxon>
        <taxon>Burkholderiaceae</taxon>
        <taxon>Polynucleobacter</taxon>
    </lineage>
</organism>